<proteinExistence type="inferred from homology"/>
<name>URE1_PHODD</name>
<comment type="catalytic activity">
    <reaction evidence="2">
        <text>urea + 2 H2O + H(+) = hydrogencarbonate + 2 NH4(+)</text>
        <dbReference type="Rhea" id="RHEA:20557"/>
        <dbReference type="ChEBI" id="CHEBI:15377"/>
        <dbReference type="ChEBI" id="CHEBI:15378"/>
        <dbReference type="ChEBI" id="CHEBI:16199"/>
        <dbReference type="ChEBI" id="CHEBI:17544"/>
        <dbReference type="ChEBI" id="CHEBI:28938"/>
        <dbReference type="EC" id="3.5.1.5"/>
    </reaction>
</comment>
<comment type="cofactor">
    <cofactor evidence="1">
        <name>Ni cation</name>
        <dbReference type="ChEBI" id="CHEBI:25516"/>
    </cofactor>
    <text evidence="1">Binds 2 nickel ions per subunit.</text>
</comment>
<comment type="pathway">
    <text>Nitrogen metabolism; urea degradation; CO(2) and NH(3) from urea (urease route): step 1/1.</text>
</comment>
<comment type="subunit">
    <text evidence="1">Heterotrimer of UreA (gamma), UreB (beta) and UreC (alpha) subunits. Three heterotrimers associate to form the active enzyme (By similarity).</text>
</comment>
<comment type="subcellular location">
    <subcellularLocation>
        <location evidence="2">Cytoplasm</location>
    </subcellularLocation>
</comment>
<comment type="PTM">
    <text evidence="1">Carboxylation allows a single lysine to coordinate two nickel ions.</text>
</comment>
<comment type="similarity">
    <text>Belongs to the metallo-dependent hydrolases superfamily. Urease alpha subunit family.</text>
</comment>
<dbReference type="EC" id="3.5.1.5"/>
<dbReference type="EMBL" id="U40071">
    <property type="protein sequence ID" value="AAA82721.1"/>
    <property type="molecule type" value="Genomic_DNA"/>
</dbReference>
<dbReference type="SMR" id="P50046"/>
<dbReference type="STRING" id="85581.CAY62_17985"/>
<dbReference type="MEROPS" id="M38.982"/>
<dbReference type="UniPathway" id="UPA00258">
    <property type="reaction ID" value="UER00370"/>
</dbReference>
<dbReference type="GO" id="GO:0005737">
    <property type="term" value="C:cytoplasm"/>
    <property type="evidence" value="ECO:0007669"/>
    <property type="project" value="UniProtKB-SubCell"/>
</dbReference>
<dbReference type="GO" id="GO:0016151">
    <property type="term" value="F:nickel cation binding"/>
    <property type="evidence" value="ECO:0007669"/>
    <property type="project" value="InterPro"/>
</dbReference>
<dbReference type="GO" id="GO:0009039">
    <property type="term" value="F:urease activity"/>
    <property type="evidence" value="ECO:0007669"/>
    <property type="project" value="UniProtKB-EC"/>
</dbReference>
<dbReference type="GO" id="GO:0043419">
    <property type="term" value="P:urea catabolic process"/>
    <property type="evidence" value="ECO:0007669"/>
    <property type="project" value="UniProtKB-UniPathway"/>
</dbReference>
<dbReference type="Gene3D" id="3.20.20.140">
    <property type="entry name" value="Metal-dependent hydrolases"/>
    <property type="match status" value="1"/>
</dbReference>
<dbReference type="Gene3D" id="2.30.40.10">
    <property type="entry name" value="Urease, subunit C, domain 1"/>
    <property type="match status" value="1"/>
</dbReference>
<dbReference type="InterPro" id="IPR006680">
    <property type="entry name" value="Amidohydro-rel"/>
</dbReference>
<dbReference type="InterPro" id="IPR011059">
    <property type="entry name" value="Metal-dep_hydrolase_composite"/>
</dbReference>
<dbReference type="InterPro" id="IPR032466">
    <property type="entry name" value="Metal_Hydrolase"/>
</dbReference>
<dbReference type="InterPro" id="IPR011612">
    <property type="entry name" value="Urease_alpha_N_dom"/>
</dbReference>
<dbReference type="InterPro" id="IPR050112">
    <property type="entry name" value="Urease_alpha_subunit"/>
</dbReference>
<dbReference type="InterPro" id="IPR017951">
    <property type="entry name" value="Urease_asu_c"/>
</dbReference>
<dbReference type="InterPro" id="IPR029754">
    <property type="entry name" value="Urease_Ni-bd"/>
</dbReference>
<dbReference type="PANTHER" id="PTHR43440">
    <property type="entry name" value="UREASE"/>
    <property type="match status" value="1"/>
</dbReference>
<dbReference type="PANTHER" id="PTHR43440:SF1">
    <property type="entry name" value="UREASE"/>
    <property type="match status" value="1"/>
</dbReference>
<dbReference type="Pfam" id="PF01979">
    <property type="entry name" value="Amidohydro_1"/>
    <property type="match status" value="1"/>
</dbReference>
<dbReference type="Pfam" id="PF00449">
    <property type="entry name" value="Urease_alpha"/>
    <property type="match status" value="1"/>
</dbReference>
<dbReference type="SUPFAM" id="SSF51338">
    <property type="entry name" value="Composite domain of metallo-dependent hydrolases"/>
    <property type="match status" value="1"/>
</dbReference>
<dbReference type="SUPFAM" id="SSF51556">
    <property type="entry name" value="Metallo-dependent hydrolases"/>
    <property type="match status" value="1"/>
</dbReference>
<dbReference type="PROSITE" id="PS01120">
    <property type="entry name" value="UREASE_1"/>
    <property type="match status" value="1"/>
</dbReference>
<dbReference type="PROSITE" id="PS51368">
    <property type="entry name" value="UREASE_3"/>
    <property type="match status" value="1"/>
</dbReference>
<sequence>RISGIGKAGNPDVQPNVDIVIGPGTEVVAGEGKIVTAGGIDTHIHFICPQQAEEGLCSGLTTFIGGGTGPVAGSNATTVTPGVWNMSRMLEAVDDLPINVGLFGKGCVSKPEALREQIEAGAVGLKLHEDWGATPAAINNCMNVADEMDIQVAI</sequence>
<gene>
    <name type="primary">ureC</name>
</gene>
<organism>
    <name type="scientific">Photobacterium damselae subsp. damselae</name>
    <name type="common">Listonella damsela</name>
    <dbReference type="NCBI Taxonomy" id="85581"/>
    <lineage>
        <taxon>Bacteria</taxon>
        <taxon>Pseudomonadati</taxon>
        <taxon>Pseudomonadota</taxon>
        <taxon>Gammaproteobacteria</taxon>
        <taxon>Vibrionales</taxon>
        <taxon>Vibrionaceae</taxon>
        <taxon>Photobacterium</taxon>
    </lineage>
</organism>
<reference key="1">
    <citation type="submission" date="1995-11" db="EMBL/GenBank/DDBJ databases">
        <authorList>
            <person name="Bruett L."/>
            <person name="Knight I.T."/>
        </authorList>
    </citation>
    <scope>NUCLEOTIDE SEQUENCE [GENOMIC DNA]</scope>
    <source>
        <strain>501</strain>
    </source>
</reference>
<protein>
    <recommendedName>
        <fullName>Urease subunit alpha</fullName>
        <ecNumber>3.5.1.5</ecNumber>
    </recommendedName>
    <alternativeName>
        <fullName>Urea amidohydrolase subunit alpha</fullName>
    </alternativeName>
</protein>
<evidence type="ECO:0000250" key="1"/>
<evidence type="ECO:0000255" key="2">
    <source>
        <dbReference type="PROSITE-ProRule" id="PRU00700"/>
    </source>
</evidence>
<accession>P50046</accession>
<keyword id="KW-0963">Cytoplasm</keyword>
<keyword id="KW-0378">Hydrolase</keyword>
<keyword id="KW-0479">Metal-binding</keyword>
<keyword id="KW-0533">Nickel</keyword>
<feature type="chain" id="PRO_0000067545" description="Urease subunit alpha">
    <location>
        <begin position="1" status="less than"/>
        <end position="154" status="greater than"/>
    </location>
</feature>
<feature type="domain" description="Urease" evidence="2">
    <location>
        <begin position="38"/>
        <end position="154" status="greater than"/>
    </location>
</feature>
<feature type="binding site" evidence="2">
    <location>
        <position position="43"/>
    </location>
    <ligand>
        <name>Ni(2+)</name>
        <dbReference type="ChEBI" id="CHEBI:49786"/>
        <label>2</label>
    </ligand>
</feature>
<feature type="binding site" evidence="2">
    <location>
        <position position="45"/>
    </location>
    <ligand>
        <name>Ni(2+)</name>
        <dbReference type="ChEBI" id="CHEBI:49786"/>
        <label>2</label>
    </ligand>
</feature>
<feature type="binding site" description="via carbamate group" evidence="2">
    <location>
        <position position="126"/>
    </location>
    <ligand>
        <name>Ni(2+)</name>
        <dbReference type="ChEBI" id="CHEBI:49786"/>
        <label>1</label>
    </ligand>
</feature>
<feature type="binding site" description="via carbamate group" evidence="2">
    <location>
        <position position="126"/>
    </location>
    <ligand>
        <name>Ni(2+)</name>
        <dbReference type="ChEBI" id="CHEBI:49786"/>
        <label>2</label>
    </ligand>
</feature>
<feature type="binding site" evidence="2">
    <location>
        <position position="128"/>
    </location>
    <ligand>
        <name>substrate</name>
    </ligand>
</feature>
<feature type="modified residue" description="N6-carboxylysine" evidence="1">
    <location>
        <position position="126"/>
    </location>
</feature>
<feature type="non-terminal residue">
    <location>
        <position position="1"/>
    </location>
</feature>
<feature type="non-terminal residue">
    <location>
        <position position="154"/>
    </location>
</feature>